<proteinExistence type="inferred from homology"/>
<comment type="function">
    <text evidence="1">DNA ligase that catalyzes the formation of phosphodiester linkages between 5'-phosphoryl and 3'-hydroxyl groups in double-stranded DNA using NAD as a coenzyme and as the energy source for the reaction. It is essential for DNA replication and repair of damaged DNA.</text>
</comment>
<comment type="catalytic activity">
    <reaction evidence="1">
        <text>NAD(+) + (deoxyribonucleotide)n-3'-hydroxyl + 5'-phospho-(deoxyribonucleotide)m = (deoxyribonucleotide)n+m + AMP + beta-nicotinamide D-nucleotide.</text>
        <dbReference type="EC" id="6.5.1.2"/>
    </reaction>
</comment>
<comment type="cofactor">
    <cofactor evidence="1">
        <name>Mg(2+)</name>
        <dbReference type="ChEBI" id="CHEBI:18420"/>
    </cofactor>
    <cofactor evidence="1">
        <name>Mn(2+)</name>
        <dbReference type="ChEBI" id="CHEBI:29035"/>
    </cofactor>
</comment>
<comment type="similarity">
    <text evidence="1">Belongs to the NAD-dependent DNA ligase family. LigA subfamily.</text>
</comment>
<name>DNLJ_TRIL1</name>
<gene>
    <name evidence="1" type="primary">ligA</name>
    <name type="ordered locus">Glov_2927</name>
</gene>
<accession>B3E8F8</accession>
<keyword id="KW-0227">DNA damage</keyword>
<keyword id="KW-0234">DNA repair</keyword>
<keyword id="KW-0235">DNA replication</keyword>
<keyword id="KW-0436">Ligase</keyword>
<keyword id="KW-0460">Magnesium</keyword>
<keyword id="KW-0464">Manganese</keyword>
<keyword id="KW-0479">Metal-binding</keyword>
<keyword id="KW-0520">NAD</keyword>
<keyword id="KW-1185">Reference proteome</keyword>
<keyword id="KW-0862">Zinc</keyword>
<dbReference type="EC" id="6.5.1.2" evidence="1"/>
<dbReference type="EMBL" id="CP001089">
    <property type="protein sequence ID" value="ACD96634.1"/>
    <property type="molecule type" value="Genomic_DNA"/>
</dbReference>
<dbReference type="RefSeq" id="WP_012470959.1">
    <property type="nucleotide sequence ID" value="NC_010814.1"/>
</dbReference>
<dbReference type="SMR" id="B3E8F8"/>
<dbReference type="STRING" id="398767.Glov_2927"/>
<dbReference type="KEGG" id="glo:Glov_2927"/>
<dbReference type="eggNOG" id="COG0272">
    <property type="taxonomic scope" value="Bacteria"/>
</dbReference>
<dbReference type="HOGENOM" id="CLU_007764_2_1_7"/>
<dbReference type="OrthoDB" id="9759736at2"/>
<dbReference type="Proteomes" id="UP000002420">
    <property type="component" value="Chromosome"/>
</dbReference>
<dbReference type="GO" id="GO:0003677">
    <property type="term" value="F:DNA binding"/>
    <property type="evidence" value="ECO:0007669"/>
    <property type="project" value="InterPro"/>
</dbReference>
<dbReference type="GO" id="GO:0003911">
    <property type="term" value="F:DNA ligase (NAD+) activity"/>
    <property type="evidence" value="ECO:0007669"/>
    <property type="project" value="UniProtKB-UniRule"/>
</dbReference>
<dbReference type="GO" id="GO:0046872">
    <property type="term" value="F:metal ion binding"/>
    <property type="evidence" value="ECO:0007669"/>
    <property type="project" value="UniProtKB-KW"/>
</dbReference>
<dbReference type="GO" id="GO:0006281">
    <property type="term" value="P:DNA repair"/>
    <property type="evidence" value="ECO:0007669"/>
    <property type="project" value="UniProtKB-KW"/>
</dbReference>
<dbReference type="GO" id="GO:0006260">
    <property type="term" value="P:DNA replication"/>
    <property type="evidence" value="ECO:0007669"/>
    <property type="project" value="UniProtKB-KW"/>
</dbReference>
<dbReference type="CDD" id="cd00114">
    <property type="entry name" value="LIGANc"/>
    <property type="match status" value="1"/>
</dbReference>
<dbReference type="FunFam" id="1.10.150.20:FF:000006">
    <property type="entry name" value="DNA ligase"/>
    <property type="match status" value="1"/>
</dbReference>
<dbReference type="FunFam" id="1.10.150.20:FF:000007">
    <property type="entry name" value="DNA ligase"/>
    <property type="match status" value="1"/>
</dbReference>
<dbReference type="FunFam" id="2.40.50.140:FF:000012">
    <property type="entry name" value="DNA ligase"/>
    <property type="match status" value="1"/>
</dbReference>
<dbReference type="FunFam" id="3.30.470.30:FF:000001">
    <property type="entry name" value="DNA ligase"/>
    <property type="match status" value="1"/>
</dbReference>
<dbReference type="Gene3D" id="6.20.10.30">
    <property type="match status" value="1"/>
</dbReference>
<dbReference type="Gene3D" id="1.10.150.20">
    <property type="entry name" value="5' to 3' exonuclease, C-terminal subdomain"/>
    <property type="match status" value="2"/>
</dbReference>
<dbReference type="Gene3D" id="3.40.50.10190">
    <property type="entry name" value="BRCT domain"/>
    <property type="match status" value="1"/>
</dbReference>
<dbReference type="Gene3D" id="3.30.470.30">
    <property type="entry name" value="DNA ligase/mRNA capping enzyme"/>
    <property type="match status" value="1"/>
</dbReference>
<dbReference type="Gene3D" id="1.10.287.610">
    <property type="entry name" value="Helix hairpin bin"/>
    <property type="match status" value="1"/>
</dbReference>
<dbReference type="Gene3D" id="2.40.50.140">
    <property type="entry name" value="Nucleic acid-binding proteins"/>
    <property type="match status" value="1"/>
</dbReference>
<dbReference type="HAMAP" id="MF_01588">
    <property type="entry name" value="DNA_ligase_A"/>
    <property type="match status" value="1"/>
</dbReference>
<dbReference type="InterPro" id="IPR001357">
    <property type="entry name" value="BRCT_dom"/>
</dbReference>
<dbReference type="InterPro" id="IPR036420">
    <property type="entry name" value="BRCT_dom_sf"/>
</dbReference>
<dbReference type="InterPro" id="IPR041663">
    <property type="entry name" value="DisA/LigA_HHH"/>
</dbReference>
<dbReference type="InterPro" id="IPR001679">
    <property type="entry name" value="DNA_ligase"/>
</dbReference>
<dbReference type="InterPro" id="IPR018239">
    <property type="entry name" value="DNA_ligase_AS"/>
</dbReference>
<dbReference type="InterPro" id="IPR033136">
    <property type="entry name" value="DNA_ligase_CS"/>
</dbReference>
<dbReference type="InterPro" id="IPR013839">
    <property type="entry name" value="DNAligase_adenylation"/>
</dbReference>
<dbReference type="InterPro" id="IPR013840">
    <property type="entry name" value="DNAligase_N"/>
</dbReference>
<dbReference type="InterPro" id="IPR003583">
    <property type="entry name" value="Hlx-hairpin-Hlx_DNA-bd_motif"/>
</dbReference>
<dbReference type="InterPro" id="IPR012340">
    <property type="entry name" value="NA-bd_OB-fold"/>
</dbReference>
<dbReference type="InterPro" id="IPR004150">
    <property type="entry name" value="NAD_DNA_ligase_OB"/>
</dbReference>
<dbReference type="InterPro" id="IPR010994">
    <property type="entry name" value="RuvA_2-like"/>
</dbReference>
<dbReference type="InterPro" id="IPR004149">
    <property type="entry name" value="Znf_DNAligase_C4"/>
</dbReference>
<dbReference type="NCBIfam" id="TIGR00575">
    <property type="entry name" value="dnlj"/>
    <property type="match status" value="1"/>
</dbReference>
<dbReference type="NCBIfam" id="NF005932">
    <property type="entry name" value="PRK07956.1"/>
    <property type="match status" value="1"/>
</dbReference>
<dbReference type="PANTHER" id="PTHR23389">
    <property type="entry name" value="CHROMOSOME TRANSMISSION FIDELITY FACTOR 18"/>
    <property type="match status" value="1"/>
</dbReference>
<dbReference type="PANTHER" id="PTHR23389:SF6">
    <property type="entry name" value="REPLICATION FACTOR C SUBUNIT 1"/>
    <property type="match status" value="1"/>
</dbReference>
<dbReference type="Pfam" id="PF00533">
    <property type="entry name" value="BRCT"/>
    <property type="match status" value="1"/>
</dbReference>
<dbReference type="Pfam" id="PF01653">
    <property type="entry name" value="DNA_ligase_aden"/>
    <property type="match status" value="1"/>
</dbReference>
<dbReference type="Pfam" id="PF03120">
    <property type="entry name" value="DNA_ligase_OB"/>
    <property type="match status" value="1"/>
</dbReference>
<dbReference type="Pfam" id="PF03119">
    <property type="entry name" value="DNA_ligase_ZBD"/>
    <property type="match status" value="1"/>
</dbReference>
<dbReference type="Pfam" id="PF12826">
    <property type="entry name" value="HHH_2"/>
    <property type="match status" value="1"/>
</dbReference>
<dbReference type="Pfam" id="PF14520">
    <property type="entry name" value="HHH_5"/>
    <property type="match status" value="1"/>
</dbReference>
<dbReference type="Pfam" id="PF22745">
    <property type="entry name" value="Nlig-Ia"/>
    <property type="match status" value="1"/>
</dbReference>
<dbReference type="PIRSF" id="PIRSF001604">
    <property type="entry name" value="LigA"/>
    <property type="match status" value="1"/>
</dbReference>
<dbReference type="SMART" id="SM00292">
    <property type="entry name" value="BRCT"/>
    <property type="match status" value="1"/>
</dbReference>
<dbReference type="SMART" id="SM00278">
    <property type="entry name" value="HhH1"/>
    <property type="match status" value="4"/>
</dbReference>
<dbReference type="SMART" id="SM00532">
    <property type="entry name" value="LIGANc"/>
    <property type="match status" value="1"/>
</dbReference>
<dbReference type="SUPFAM" id="SSF52113">
    <property type="entry name" value="BRCT domain"/>
    <property type="match status" value="1"/>
</dbReference>
<dbReference type="SUPFAM" id="SSF56091">
    <property type="entry name" value="DNA ligase/mRNA capping enzyme, catalytic domain"/>
    <property type="match status" value="1"/>
</dbReference>
<dbReference type="SUPFAM" id="SSF50249">
    <property type="entry name" value="Nucleic acid-binding proteins"/>
    <property type="match status" value="1"/>
</dbReference>
<dbReference type="SUPFAM" id="SSF47781">
    <property type="entry name" value="RuvA domain 2-like"/>
    <property type="match status" value="1"/>
</dbReference>
<dbReference type="PROSITE" id="PS50172">
    <property type="entry name" value="BRCT"/>
    <property type="match status" value="1"/>
</dbReference>
<dbReference type="PROSITE" id="PS01055">
    <property type="entry name" value="DNA_LIGASE_N1"/>
    <property type="match status" value="1"/>
</dbReference>
<dbReference type="PROSITE" id="PS01056">
    <property type="entry name" value="DNA_LIGASE_N2"/>
    <property type="match status" value="1"/>
</dbReference>
<organism>
    <name type="scientific">Trichlorobacter lovleyi (strain ATCC BAA-1151 / DSM 17278 / SZ)</name>
    <name type="common">Geobacter lovleyi</name>
    <dbReference type="NCBI Taxonomy" id="398767"/>
    <lineage>
        <taxon>Bacteria</taxon>
        <taxon>Pseudomonadati</taxon>
        <taxon>Thermodesulfobacteriota</taxon>
        <taxon>Desulfuromonadia</taxon>
        <taxon>Geobacterales</taxon>
        <taxon>Geobacteraceae</taxon>
        <taxon>Trichlorobacter</taxon>
    </lineage>
</organism>
<feature type="chain" id="PRO_0000380389" description="DNA ligase">
    <location>
        <begin position="1"/>
        <end position="683"/>
    </location>
</feature>
<feature type="domain" description="BRCT" evidence="1">
    <location>
        <begin position="601"/>
        <end position="683"/>
    </location>
</feature>
<feature type="active site" description="N6-AMP-lysine intermediate" evidence="1">
    <location>
        <position position="129"/>
    </location>
</feature>
<feature type="binding site" evidence="1">
    <location>
        <begin position="44"/>
        <end position="48"/>
    </location>
    <ligand>
        <name>NAD(+)</name>
        <dbReference type="ChEBI" id="CHEBI:57540"/>
    </ligand>
</feature>
<feature type="binding site" evidence="1">
    <location>
        <begin position="93"/>
        <end position="94"/>
    </location>
    <ligand>
        <name>NAD(+)</name>
        <dbReference type="ChEBI" id="CHEBI:57540"/>
    </ligand>
</feature>
<feature type="binding site" evidence="1">
    <location>
        <position position="127"/>
    </location>
    <ligand>
        <name>NAD(+)</name>
        <dbReference type="ChEBI" id="CHEBI:57540"/>
    </ligand>
</feature>
<feature type="binding site" evidence="1">
    <location>
        <position position="150"/>
    </location>
    <ligand>
        <name>NAD(+)</name>
        <dbReference type="ChEBI" id="CHEBI:57540"/>
    </ligand>
</feature>
<feature type="binding site" evidence="1">
    <location>
        <position position="187"/>
    </location>
    <ligand>
        <name>NAD(+)</name>
        <dbReference type="ChEBI" id="CHEBI:57540"/>
    </ligand>
</feature>
<feature type="binding site" evidence="1">
    <location>
        <position position="302"/>
    </location>
    <ligand>
        <name>NAD(+)</name>
        <dbReference type="ChEBI" id="CHEBI:57540"/>
    </ligand>
</feature>
<feature type="binding site" evidence="1">
    <location>
        <position position="326"/>
    </location>
    <ligand>
        <name>NAD(+)</name>
        <dbReference type="ChEBI" id="CHEBI:57540"/>
    </ligand>
</feature>
<feature type="binding site" evidence="1">
    <location>
        <position position="420"/>
    </location>
    <ligand>
        <name>Zn(2+)</name>
        <dbReference type="ChEBI" id="CHEBI:29105"/>
    </ligand>
</feature>
<feature type="binding site" evidence="1">
    <location>
        <position position="423"/>
    </location>
    <ligand>
        <name>Zn(2+)</name>
        <dbReference type="ChEBI" id="CHEBI:29105"/>
    </ligand>
</feature>
<feature type="binding site" evidence="1">
    <location>
        <position position="438"/>
    </location>
    <ligand>
        <name>Zn(2+)</name>
        <dbReference type="ChEBI" id="CHEBI:29105"/>
    </ligand>
</feature>
<feature type="binding site" evidence="1">
    <location>
        <position position="444"/>
    </location>
    <ligand>
        <name>Zn(2+)</name>
        <dbReference type="ChEBI" id="CHEBI:29105"/>
    </ligand>
</feature>
<reference key="1">
    <citation type="submission" date="2008-05" db="EMBL/GenBank/DDBJ databases">
        <title>Complete sequence of chromosome of Geobacter lovleyi SZ.</title>
        <authorList>
            <consortium name="US DOE Joint Genome Institute"/>
            <person name="Lucas S."/>
            <person name="Copeland A."/>
            <person name="Lapidus A."/>
            <person name="Glavina del Rio T."/>
            <person name="Dalin E."/>
            <person name="Tice H."/>
            <person name="Bruce D."/>
            <person name="Goodwin L."/>
            <person name="Pitluck S."/>
            <person name="Chertkov O."/>
            <person name="Meincke L."/>
            <person name="Brettin T."/>
            <person name="Detter J.C."/>
            <person name="Han C."/>
            <person name="Tapia R."/>
            <person name="Kuske C.R."/>
            <person name="Schmutz J."/>
            <person name="Larimer F."/>
            <person name="Land M."/>
            <person name="Hauser L."/>
            <person name="Kyrpides N."/>
            <person name="Mikhailova N."/>
            <person name="Sung Y."/>
            <person name="Fletcher K.E."/>
            <person name="Ritalahti K.M."/>
            <person name="Loeffler F.E."/>
            <person name="Richardson P."/>
        </authorList>
    </citation>
    <scope>NUCLEOTIDE SEQUENCE [LARGE SCALE GENOMIC DNA]</scope>
    <source>
        <strain>ATCC BAA-1151 / DSM 17278 / SZ</strain>
    </source>
</reference>
<protein>
    <recommendedName>
        <fullName evidence="1">DNA ligase</fullName>
        <ecNumber evidence="1">6.5.1.2</ecNumber>
    </recommendedName>
    <alternativeName>
        <fullName evidence="1">Polydeoxyribonucleotide synthase [NAD(+)]</fullName>
    </alternativeName>
</protein>
<evidence type="ECO:0000255" key="1">
    <source>
        <dbReference type="HAMAP-Rule" id="MF_01588"/>
    </source>
</evidence>
<sequence>MQQLSLLDSVVIPDTAQLRAAELRRLLEHHNRCYYELDSPEISDAEYDALFRELQVIEAARPDLLTPDSPTLRVGGKPLARFSQVRHRMPMLSLENAMQEDEIRGFEQRIRSLLALPDTVALQYQCEPKMDGLAVELVYQDGLLVQASTRGDGEVGEEVTANIRTVRNVPLRLTGDNLPALLEVRGEVYLPLAAFQQLNQQREEAGEPPFANPRNAAAGSIRQLDPAVVARRPLAMVCYGVGVMETEARTQTELMSQLAAWGLPVSDQARQVSGIEGAIACFQDLQERRDSLLYEIDGMVIKVDDLRLQQELGEKSRSPRWAIACKFPPRQATTRINEIILSVGRTGVITPVASLEPVELSGVTVSRATLHNWDEIRRKDIRVGDRVIVERAGDVIPAVVKVLLDKRSGTEQELPEPETCPVCGSRAAREAGEVAVRCQGGLACPPQLAESIIHFASRDAMDIDGLGSKYIEQLISLGLVKDIADLYRLTRDDFMQFERMGDKLAENLLAAIASSKQQELSRFIFALGIRHVGERTARTLAERFGSIDNLQTATLEELTSIRDVGPAVAISIRSFFDAPANQTVLQRLKAAGVAPTVEEKRVGGRLAGLTFVFTGTLATLGRDEAKKLVEAEGGNVTGSVSKKTDYVVAGSEAGSKLEKARNLGITVLSEDAFSKLLATGGNQ</sequence>